<name>NUOC_BURTA</name>
<gene>
    <name evidence="1" type="primary">nuoC</name>
    <name type="ordered locus">BTH_I1063</name>
</gene>
<sequence length="200" mass="22790">MASKIETLKANLEAALGARAVSLVEAVGELTLVVKASDYLEVAKQLRDDRSLGFEQLIDLCGIDYQTYGDGAYDGPRFAAVLHLLSVANNWRLRVRVFAPDDDLPIVPSVVDIWNSANWYEREAFDLYGIVFEGHPDLRRILTDYGFIGHPFRKDFPVSGYVEMRYDPEEKRVVYQPVTIEPREITPRVIREDRYGGLKH</sequence>
<feature type="chain" id="PRO_0000358076" description="NADH-quinone oxidoreductase subunit C">
    <location>
        <begin position="1"/>
        <end position="200"/>
    </location>
</feature>
<dbReference type="EC" id="7.1.1.-" evidence="1"/>
<dbReference type="EMBL" id="CP000086">
    <property type="protein sequence ID" value="ABC37241.1"/>
    <property type="molecule type" value="Genomic_DNA"/>
</dbReference>
<dbReference type="RefSeq" id="WP_009892174.1">
    <property type="nucleotide sequence ID" value="NC_007651.1"/>
</dbReference>
<dbReference type="SMR" id="Q2SZN3"/>
<dbReference type="GeneID" id="45120815"/>
<dbReference type="KEGG" id="bte:BTH_I1063"/>
<dbReference type="HOGENOM" id="CLU_042628_2_1_4"/>
<dbReference type="Proteomes" id="UP000001930">
    <property type="component" value="Chromosome I"/>
</dbReference>
<dbReference type="GO" id="GO:0005886">
    <property type="term" value="C:plasma membrane"/>
    <property type="evidence" value="ECO:0007669"/>
    <property type="project" value="UniProtKB-SubCell"/>
</dbReference>
<dbReference type="GO" id="GO:0008137">
    <property type="term" value="F:NADH dehydrogenase (ubiquinone) activity"/>
    <property type="evidence" value="ECO:0007669"/>
    <property type="project" value="InterPro"/>
</dbReference>
<dbReference type="GO" id="GO:0050136">
    <property type="term" value="F:NADH:ubiquinone reductase (non-electrogenic) activity"/>
    <property type="evidence" value="ECO:0007669"/>
    <property type="project" value="UniProtKB-UniRule"/>
</dbReference>
<dbReference type="GO" id="GO:0048038">
    <property type="term" value="F:quinone binding"/>
    <property type="evidence" value="ECO:0007669"/>
    <property type="project" value="UniProtKB-KW"/>
</dbReference>
<dbReference type="Gene3D" id="3.30.460.80">
    <property type="entry name" value="NADH:ubiquinone oxidoreductase, 30kDa subunit"/>
    <property type="match status" value="1"/>
</dbReference>
<dbReference type="HAMAP" id="MF_01357">
    <property type="entry name" value="NDH1_NuoC"/>
    <property type="match status" value="1"/>
</dbReference>
<dbReference type="InterPro" id="IPR010218">
    <property type="entry name" value="NADH_DH_suC"/>
</dbReference>
<dbReference type="InterPro" id="IPR037232">
    <property type="entry name" value="NADH_quin_OxRdtase_su_C/D-like"/>
</dbReference>
<dbReference type="InterPro" id="IPR001268">
    <property type="entry name" value="NADH_UbQ_OxRdtase_30kDa_su"/>
</dbReference>
<dbReference type="InterPro" id="IPR020396">
    <property type="entry name" value="NADH_UbQ_OxRdtase_CS"/>
</dbReference>
<dbReference type="NCBIfam" id="TIGR01961">
    <property type="entry name" value="NuoC_fam"/>
    <property type="match status" value="1"/>
</dbReference>
<dbReference type="NCBIfam" id="NF004730">
    <property type="entry name" value="PRK06074.1-1"/>
    <property type="match status" value="1"/>
</dbReference>
<dbReference type="PANTHER" id="PTHR10884:SF14">
    <property type="entry name" value="NADH DEHYDROGENASE [UBIQUINONE] IRON-SULFUR PROTEIN 3, MITOCHONDRIAL"/>
    <property type="match status" value="1"/>
</dbReference>
<dbReference type="PANTHER" id="PTHR10884">
    <property type="entry name" value="NADH DEHYDROGENASE UBIQUINONE IRON-SULFUR PROTEIN 3"/>
    <property type="match status" value="1"/>
</dbReference>
<dbReference type="Pfam" id="PF00329">
    <property type="entry name" value="Complex1_30kDa"/>
    <property type="match status" value="1"/>
</dbReference>
<dbReference type="SUPFAM" id="SSF143243">
    <property type="entry name" value="Nqo5-like"/>
    <property type="match status" value="1"/>
</dbReference>
<dbReference type="PROSITE" id="PS00542">
    <property type="entry name" value="COMPLEX1_30K"/>
    <property type="match status" value="1"/>
</dbReference>
<keyword id="KW-0997">Cell inner membrane</keyword>
<keyword id="KW-1003">Cell membrane</keyword>
<keyword id="KW-0472">Membrane</keyword>
<keyword id="KW-0520">NAD</keyword>
<keyword id="KW-0874">Quinone</keyword>
<keyword id="KW-1278">Translocase</keyword>
<keyword id="KW-0813">Transport</keyword>
<keyword id="KW-0830">Ubiquinone</keyword>
<evidence type="ECO:0000255" key="1">
    <source>
        <dbReference type="HAMAP-Rule" id="MF_01357"/>
    </source>
</evidence>
<comment type="function">
    <text evidence="1">NDH-1 shuttles electrons from NADH, via FMN and iron-sulfur (Fe-S) centers, to quinones in the respiratory chain. The immediate electron acceptor for the enzyme in this species is believed to be ubiquinone. Couples the redox reaction to proton translocation (for every two electrons transferred, four hydrogen ions are translocated across the cytoplasmic membrane), and thus conserves the redox energy in a proton gradient.</text>
</comment>
<comment type="catalytic activity">
    <reaction evidence="1">
        <text>a quinone + NADH + 5 H(+)(in) = a quinol + NAD(+) + 4 H(+)(out)</text>
        <dbReference type="Rhea" id="RHEA:57888"/>
        <dbReference type="ChEBI" id="CHEBI:15378"/>
        <dbReference type="ChEBI" id="CHEBI:24646"/>
        <dbReference type="ChEBI" id="CHEBI:57540"/>
        <dbReference type="ChEBI" id="CHEBI:57945"/>
        <dbReference type="ChEBI" id="CHEBI:132124"/>
    </reaction>
</comment>
<comment type="subunit">
    <text evidence="1">NDH-1 is composed of 14 different subunits. Subunits NuoB, C, D, E, F, and G constitute the peripheral sector of the complex.</text>
</comment>
<comment type="subcellular location">
    <subcellularLocation>
        <location evidence="1">Cell inner membrane</location>
        <topology evidence="1">Peripheral membrane protein</topology>
        <orientation evidence="1">Cytoplasmic side</orientation>
    </subcellularLocation>
</comment>
<comment type="similarity">
    <text evidence="1">Belongs to the complex I 30 kDa subunit family.</text>
</comment>
<protein>
    <recommendedName>
        <fullName evidence="1">NADH-quinone oxidoreductase subunit C</fullName>
        <ecNumber evidence="1">7.1.1.-</ecNumber>
    </recommendedName>
    <alternativeName>
        <fullName evidence="1">NADH dehydrogenase I subunit C</fullName>
    </alternativeName>
    <alternativeName>
        <fullName evidence="1">NDH-1 subunit C</fullName>
    </alternativeName>
</protein>
<reference key="1">
    <citation type="journal article" date="2005" name="BMC Genomics">
        <title>Bacterial genome adaptation to niches: divergence of the potential virulence genes in three Burkholderia species of different survival strategies.</title>
        <authorList>
            <person name="Kim H.S."/>
            <person name="Schell M.A."/>
            <person name="Yu Y."/>
            <person name="Ulrich R.L."/>
            <person name="Sarria S.H."/>
            <person name="Nierman W.C."/>
            <person name="DeShazer D."/>
        </authorList>
    </citation>
    <scope>NUCLEOTIDE SEQUENCE [LARGE SCALE GENOMIC DNA]</scope>
    <source>
        <strain>ATCC 700388 / DSM 13276 / CCUG 48851 / CIP 106301 / E264</strain>
    </source>
</reference>
<proteinExistence type="inferred from homology"/>
<accession>Q2SZN3</accession>
<organism>
    <name type="scientific">Burkholderia thailandensis (strain ATCC 700388 / DSM 13276 / CCUG 48851 / CIP 106301 / E264)</name>
    <dbReference type="NCBI Taxonomy" id="271848"/>
    <lineage>
        <taxon>Bacteria</taxon>
        <taxon>Pseudomonadati</taxon>
        <taxon>Pseudomonadota</taxon>
        <taxon>Betaproteobacteria</taxon>
        <taxon>Burkholderiales</taxon>
        <taxon>Burkholderiaceae</taxon>
        <taxon>Burkholderia</taxon>
        <taxon>pseudomallei group</taxon>
    </lineage>
</organism>